<dbReference type="EMBL" id="AL590842">
    <property type="protein sequence ID" value="CAL19016.1"/>
    <property type="molecule type" value="Genomic_DNA"/>
</dbReference>
<dbReference type="EMBL" id="AE009952">
    <property type="protein sequence ID" value="AAM84178.1"/>
    <property type="molecule type" value="Genomic_DNA"/>
</dbReference>
<dbReference type="EMBL" id="AE017042">
    <property type="protein sequence ID" value="AAS60757.1"/>
    <property type="molecule type" value="Genomic_DNA"/>
</dbReference>
<dbReference type="PIR" id="AF0041">
    <property type="entry name" value="AF0041"/>
</dbReference>
<dbReference type="RefSeq" id="WP_002209108.1">
    <property type="nucleotide sequence ID" value="NZ_WUCM01000014.1"/>
</dbReference>
<dbReference type="RefSeq" id="YP_002345412.1">
    <property type="nucleotide sequence ID" value="NC_003143.1"/>
</dbReference>
<dbReference type="SMR" id="Q8ZJ00"/>
<dbReference type="STRING" id="214092.YPO0332"/>
<dbReference type="PaxDb" id="214092-YPO0332"/>
<dbReference type="DNASU" id="1145537"/>
<dbReference type="EnsemblBacteria" id="AAS60757">
    <property type="protein sequence ID" value="AAS60757"/>
    <property type="gene ID" value="YP_0487"/>
</dbReference>
<dbReference type="GeneID" id="57974273"/>
<dbReference type="KEGG" id="ype:YPO0332"/>
<dbReference type="KEGG" id="ypk:y0590"/>
<dbReference type="KEGG" id="ypm:YP_0487"/>
<dbReference type="PATRIC" id="fig|214092.21.peg.570"/>
<dbReference type="eggNOG" id="COG4977">
    <property type="taxonomic scope" value="Bacteria"/>
</dbReference>
<dbReference type="HOGENOM" id="CLU_000445_88_5_6"/>
<dbReference type="OMA" id="GHYPSHW"/>
<dbReference type="OrthoDB" id="2547276at2"/>
<dbReference type="Proteomes" id="UP000000815">
    <property type="component" value="Chromosome"/>
</dbReference>
<dbReference type="Proteomes" id="UP000001019">
    <property type="component" value="Chromosome"/>
</dbReference>
<dbReference type="Proteomes" id="UP000002490">
    <property type="component" value="Chromosome"/>
</dbReference>
<dbReference type="GO" id="GO:0005737">
    <property type="term" value="C:cytoplasm"/>
    <property type="evidence" value="ECO:0007669"/>
    <property type="project" value="UniProtKB-SubCell"/>
</dbReference>
<dbReference type="GO" id="GO:0000987">
    <property type="term" value="F:cis-regulatory region sequence-specific DNA binding"/>
    <property type="evidence" value="ECO:0000318"/>
    <property type="project" value="GO_Central"/>
</dbReference>
<dbReference type="GO" id="GO:0003700">
    <property type="term" value="F:DNA-binding transcription factor activity"/>
    <property type="evidence" value="ECO:0000318"/>
    <property type="project" value="GO_Central"/>
</dbReference>
<dbReference type="GO" id="GO:0045893">
    <property type="term" value="P:positive regulation of DNA-templated transcription"/>
    <property type="evidence" value="ECO:0007669"/>
    <property type="project" value="UniProtKB-UniRule"/>
</dbReference>
<dbReference type="GO" id="GO:0006355">
    <property type="term" value="P:regulation of DNA-templated transcription"/>
    <property type="evidence" value="ECO:0000318"/>
    <property type="project" value="GO_Central"/>
</dbReference>
<dbReference type="GO" id="GO:0019299">
    <property type="term" value="P:rhamnose metabolic process"/>
    <property type="evidence" value="ECO:0007669"/>
    <property type="project" value="UniProtKB-UniRule"/>
</dbReference>
<dbReference type="CDD" id="cd06977">
    <property type="entry name" value="cupin_RhaR_RhaS-like_N"/>
    <property type="match status" value="1"/>
</dbReference>
<dbReference type="Gene3D" id="1.10.10.60">
    <property type="entry name" value="Homeodomain-like"/>
    <property type="match status" value="1"/>
</dbReference>
<dbReference type="Gene3D" id="2.60.120.10">
    <property type="entry name" value="Jelly Rolls"/>
    <property type="match status" value="1"/>
</dbReference>
<dbReference type="HAMAP" id="MF_01534">
    <property type="entry name" value="HTH_type_RhaS"/>
    <property type="match status" value="1"/>
</dbReference>
<dbReference type="InterPro" id="IPR003313">
    <property type="entry name" value="AraC-bd"/>
</dbReference>
<dbReference type="InterPro" id="IPR050204">
    <property type="entry name" value="AraC_XylS_family_regulators"/>
</dbReference>
<dbReference type="InterPro" id="IPR009057">
    <property type="entry name" value="Homeodomain-like_sf"/>
</dbReference>
<dbReference type="InterPro" id="IPR037923">
    <property type="entry name" value="HTH-like"/>
</dbReference>
<dbReference type="InterPro" id="IPR018060">
    <property type="entry name" value="HTH_AraC"/>
</dbReference>
<dbReference type="InterPro" id="IPR047220">
    <property type="entry name" value="RhaR_RhaS-like_N"/>
</dbReference>
<dbReference type="InterPro" id="IPR014710">
    <property type="entry name" value="RmlC-like_jellyroll"/>
</dbReference>
<dbReference type="InterPro" id="IPR020449">
    <property type="entry name" value="Tscrpt_reg_AraC-type_HTH"/>
</dbReference>
<dbReference type="InterPro" id="IPR023609">
    <property type="entry name" value="Tscrpt_reg_HTH_RhaS"/>
</dbReference>
<dbReference type="NCBIfam" id="NF010028">
    <property type="entry name" value="PRK13503.1"/>
    <property type="match status" value="1"/>
</dbReference>
<dbReference type="PANTHER" id="PTHR46796:SF13">
    <property type="entry name" value="HTH-TYPE TRANSCRIPTIONAL ACTIVATOR RHAS"/>
    <property type="match status" value="1"/>
</dbReference>
<dbReference type="PANTHER" id="PTHR46796">
    <property type="entry name" value="HTH-TYPE TRANSCRIPTIONAL ACTIVATOR RHAS-RELATED"/>
    <property type="match status" value="1"/>
</dbReference>
<dbReference type="Pfam" id="PF02311">
    <property type="entry name" value="AraC_binding"/>
    <property type="match status" value="1"/>
</dbReference>
<dbReference type="Pfam" id="PF12833">
    <property type="entry name" value="HTH_18"/>
    <property type="match status" value="1"/>
</dbReference>
<dbReference type="PRINTS" id="PR00032">
    <property type="entry name" value="HTHARAC"/>
</dbReference>
<dbReference type="SMART" id="SM00342">
    <property type="entry name" value="HTH_ARAC"/>
    <property type="match status" value="1"/>
</dbReference>
<dbReference type="SUPFAM" id="SSF46689">
    <property type="entry name" value="Homeodomain-like"/>
    <property type="match status" value="2"/>
</dbReference>
<dbReference type="SUPFAM" id="SSF51215">
    <property type="entry name" value="Regulatory protein AraC"/>
    <property type="match status" value="1"/>
</dbReference>
<dbReference type="PROSITE" id="PS01124">
    <property type="entry name" value="HTH_ARAC_FAMILY_2"/>
    <property type="match status" value="1"/>
</dbReference>
<evidence type="ECO:0000255" key="1">
    <source>
        <dbReference type="HAMAP-Rule" id="MF_01534"/>
    </source>
</evidence>
<evidence type="ECO:0000305" key="2"/>
<organism>
    <name type="scientific">Yersinia pestis</name>
    <dbReference type="NCBI Taxonomy" id="632"/>
    <lineage>
        <taxon>Bacteria</taxon>
        <taxon>Pseudomonadati</taxon>
        <taxon>Pseudomonadota</taxon>
        <taxon>Gammaproteobacteria</taxon>
        <taxon>Enterobacterales</taxon>
        <taxon>Yersiniaceae</taxon>
        <taxon>Yersinia</taxon>
    </lineage>
</organism>
<accession>Q8ZJ00</accession>
<accession>Q0WJX6</accession>
<accession>Q74XE5</accession>
<accession>Q7CKN7</accession>
<protein>
    <recommendedName>
        <fullName evidence="1">HTH-type transcriptional activator RhaS</fullName>
    </recommendedName>
    <alternativeName>
        <fullName evidence="1">L-rhamnose operon regulatory protein RhaS</fullName>
    </alternativeName>
</protein>
<keyword id="KW-0010">Activator</keyword>
<keyword id="KW-0963">Cytoplasm</keyword>
<keyword id="KW-0238">DNA-binding</keyword>
<keyword id="KW-1185">Reference proteome</keyword>
<keyword id="KW-0677">Repeat</keyword>
<keyword id="KW-0684">Rhamnose metabolism</keyword>
<keyword id="KW-0804">Transcription</keyword>
<keyword id="KW-0805">Transcription regulation</keyword>
<proteinExistence type="inferred from homology"/>
<name>RHAS_YERPE</name>
<comment type="function">
    <text evidence="1">Activates expression of the rhaBAD and rhaT operons.</text>
</comment>
<comment type="subunit">
    <text evidence="1">Binds DNA as a dimer.</text>
</comment>
<comment type="subcellular location">
    <subcellularLocation>
        <location evidence="1">Cytoplasm</location>
    </subcellularLocation>
</comment>
<sequence length="273" mass="31393">MTVLHSIDFFSSSSAPVAIEARAPQSAFPEHHHDFYEIVIVEEGAGVHVFNGNPYTLSRGCVCFVRDHDRHLFESTDDLFLTNVLFRAPDAFRFLSGVGHFLPRECDGVYPSHWRVNGQVLQQIKCLIACLEHAPKSDQVEDIALHESVFMQLLVKLWQGCQTQVGDDQEGRLYQLLDWLQNNYSEAVEWPELADRFALPLRTLHRQLKNKTGMTPQRYLTRLHLLQARHQLCYSDNSVTDIAYLCGFGDSNHFSTLFKREFSQSPRDLRSQL</sequence>
<feature type="chain" id="PRO_0000194573" description="HTH-type transcriptional activator RhaS">
    <location>
        <begin position="1"/>
        <end position="273"/>
    </location>
</feature>
<feature type="domain" description="HTH araC/xylS-type" evidence="1">
    <location>
        <begin position="174"/>
        <end position="272"/>
    </location>
</feature>
<feature type="DNA-binding region" description="H-T-H motif" evidence="1">
    <location>
        <begin position="191"/>
        <end position="212"/>
    </location>
</feature>
<feature type="DNA-binding region" description="H-T-H motif" evidence="1">
    <location>
        <begin position="239"/>
        <end position="262"/>
    </location>
</feature>
<feature type="site" description="Interaction with sigma-70" evidence="1">
    <location>
        <position position="241"/>
    </location>
</feature>
<feature type="site" description="Interaction with sigma-70" evidence="1">
    <location>
        <position position="250"/>
    </location>
</feature>
<feature type="sequence conflict" description="In Ref. 3; AAS60757." evidence="2" ref="3">
    <original>H</original>
    <variation>R</variation>
    <location>
        <position position="224"/>
    </location>
</feature>
<gene>
    <name evidence="1" type="primary">rhaS</name>
    <name type="ordered locus">YPO0332</name>
    <name type="ordered locus">y0590</name>
    <name type="ordered locus">YP_0487</name>
</gene>
<reference key="1">
    <citation type="journal article" date="2001" name="Nature">
        <title>Genome sequence of Yersinia pestis, the causative agent of plague.</title>
        <authorList>
            <person name="Parkhill J."/>
            <person name="Wren B.W."/>
            <person name="Thomson N.R."/>
            <person name="Titball R.W."/>
            <person name="Holden M.T.G."/>
            <person name="Prentice M.B."/>
            <person name="Sebaihia M."/>
            <person name="James K.D."/>
            <person name="Churcher C.M."/>
            <person name="Mungall K.L."/>
            <person name="Baker S."/>
            <person name="Basham D."/>
            <person name="Bentley S.D."/>
            <person name="Brooks K."/>
            <person name="Cerdeno-Tarraga A.-M."/>
            <person name="Chillingworth T."/>
            <person name="Cronin A."/>
            <person name="Davies R.M."/>
            <person name="Davis P."/>
            <person name="Dougan G."/>
            <person name="Feltwell T."/>
            <person name="Hamlin N."/>
            <person name="Holroyd S."/>
            <person name="Jagels K."/>
            <person name="Karlyshev A.V."/>
            <person name="Leather S."/>
            <person name="Moule S."/>
            <person name="Oyston P.C.F."/>
            <person name="Quail M.A."/>
            <person name="Rutherford K.M."/>
            <person name="Simmonds M."/>
            <person name="Skelton J."/>
            <person name="Stevens K."/>
            <person name="Whitehead S."/>
            <person name="Barrell B.G."/>
        </authorList>
    </citation>
    <scope>NUCLEOTIDE SEQUENCE [LARGE SCALE GENOMIC DNA]</scope>
    <source>
        <strain>CO-92 / Biovar Orientalis</strain>
    </source>
</reference>
<reference key="2">
    <citation type="journal article" date="2002" name="J. Bacteriol.">
        <title>Genome sequence of Yersinia pestis KIM.</title>
        <authorList>
            <person name="Deng W."/>
            <person name="Burland V."/>
            <person name="Plunkett G. III"/>
            <person name="Boutin A."/>
            <person name="Mayhew G.F."/>
            <person name="Liss P."/>
            <person name="Perna N.T."/>
            <person name="Rose D.J."/>
            <person name="Mau B."/>
            <person name="Zhou S."/>
            <person name="Schwartz D.C."/>
            <person name="Fetherston J.D."/>
            <person name="Lindler L.E."/>
            <person name="Brubaker R.R."/>
            <person name="Plano G.V."/>
            <person name="Straley S.C."/>
            <person name="McDonough K.A."/>
            <person name="Nilles M.L."/>
            <person name="Matson J.S."/>
            <person name="Blattner F.R."/>
            <person name="Perry R.D."/>
        </authorList>
    </citation>
    <scope>NUCLEOTIDE SEQUENCE [LARGE SCALE GENOMIC DNA]</scope>
    <source>
        <strain>KIM10+ / Biovar Mediaevalis</strain>
    </source>
</reference>
<reference key="3">
    <citation type="journal article" date="2004" name="DNA Res.">
        <title>Complete genome sequence of Yersinia pestis strain 91001, an isolate avirulent to humans.</title>
        <authorList>
            <person name="Song Y."/>
            <person name="Tong Z."/>
            <person name="Wang J."/>
            <person name="Wang L."/>
            <person name="Guo Z."/>
            <person name="Han Y."/>
            <person name="Zhang J."/>
            <person name="Pei D."/>
            <person name="Zhou D."/>
            <person name="Qin H."/>
            <person name="Pang X."/>
            <person name="Han Y."/>
            <person name="Zhai J."/>
            <person name="Li M."/>
            <person name="Cui B."/>
            <person name="Qi Z."/>
            <person name="Jin L."/>
            <person name="Dai R."/>
            <person name="Chen F."/>
            <person name="Li S."/>
            <person name="Ye C."/>
            <person name="Du Z."/>
            <person name="Lin W."/>
            <person name="Wang J."/>
            <person name="Yu J."/>
            <person name="Yang H."/>
            <person name="Wang J."/>
            <person name="Huang P."/>
            <person name="Yang R."/>
        </authorList>
    </citation>
    <scope>NUCLEOTIDE SEQUENCE [LARGE SCALE GENOMIC DNA]</scope>
    <source>
        <strain>91001 / Biovar Mediaevalis</strain>
    </source>
</reference>